<feature type="chain" id="PRO_0000239052" description="G-protein coupled receptor-associated sorting protein 1">
    <location>
        <begin position="1"/>
        <end position="1346"/>
    </location>
</feature>
<feature type="region of interest" description="Disordered" evidence="3">
    <location>
        <begin position="1"/>
        <end position="101"/>
    </location>
</feature>
<feature type="region of interest" description="Disordered" evidence="3">
    <location>
        <begin position="144"/>
        <end position="177"/>
    </location>
</feature>
<feature type="region of interest" description="Disordered" evidence="3">
    <location>
        <begin position="192"/>
        <end position="258"/>
    </location>
</feature>
<feature type="region of interest" description="Disordered" evidence="3">
    <location>
        <begin position="311"/>
        <end position="399"/>
    </location>
</feature>
<feature type="region of interest" description="Disordered" evidence="3">
    <location>
        <begin position="461"/>
        <end position="485"/>
    </location>
</feature>
<feature type="region of interest" description="Disordered" evidence="3">
    <location>
        <begin position="984"/>
        <end position="1004"/>
    </location>
</feature>
<feature type="compositionally biased region" description="Low complexity" evidence="3">
    <location>
        <begin position="21"/>
        <end position="36"/>
    </location>
</feature>
<feature type="compositionally biased region" description="Basic residues" evidence="3">
    <location>
        <begin position="211"/>
        <end position="226"/>
    </location>
</feature>
<feature type="compositionally biased region" description="Basic residues" evidence="3">
    <location>
        <begin position="316"/>
        <end position="333"/>
    </location>
</feature>
<feature type="compositionally biased region" description="Basic and acidic residues" evidence="3">
    <location>
        <begin position="347"/>
        <end position="361"/>
    </location>
</feature>
<feature type="compositionally biased region" description="Basic and acidic residues" evidence="3">
    <location>
        <begin position="370"/>
        <end position="399"/>
    </location>
</feature>
<feature type="compositionally biased region" description="Polar residues" evidence="3">
    <location>
        <begin position="461"/>
        <end position="484"/>
    </location>
</feature>
<feature type="compositionally biased region" description="Basic and acidic residues" evidence="3">
    <location>
        <begin position="990"/>
        <end position="1003"/>
    </location>
</feature>
<feature type="modified residue" description="Phosphoserine" evidence="2">
    <location>
        <position position="295"/>
    </location>
</feature>
<feature type="modified residue" description="Phosphoserine" evidence="2">
    <location>
        <position position="619"/>
    </location>
</feature>
<feature type="modified residue" description="Phosphoserine" evidence="2">
    <location>
        <position position="626"/>
    </location>
</feature>
<feature type="modified residue" description="Phosphothreonine" evidence="7">
    <location>
        <position position="860"/>
    </location>
</feature>
<feature type="modified residue" description="Phosphoserine" evidence="7">
    <location>
        <position position="862"/>
    </location>
</feature>
<name>GASP1_RAT</name>
<protein>
    <recommendedName>
        <fullName>G-protein coupled receptor-associated sorting protein 1</fullName>
        <shortName>GASP-1</shortName>
    </recommendedName>
    <alternativeName>
        <fullName>Per1-interacting protein</fullName>
    </alternativeName>
</protein>
<accession>Q920R4</accession>
<organism>
    <name type="scientific">Rattus norvegicus</name>
    <name type="common">Rat</name>
    <dbReference type="NCBI Taxonomy" id="10116"/>
    <lineage>
        <taxon>Eukaryota</taxon>
        <taxon>Metazoa</taxon>
        <taxon>Chordata</taxon>
        <taxon>Craniata</taxon>
        <taxon>Vertebrata</taxon>
        <taxon>Euteleostomi</taxon>
        <taxon>Mammalia</taxon>
        <taxon>Eutheria</taxon>
        <taxon>Euarchontoglires</taxon>
        <taxon>Glires</taxon>
        <taxon>Rodentia</taxon>
        <taxon>Myomorpha</taxon>
        <taxon>Muroidea</taxon>
        <taxon>Muridae</taxon>
        <taxon>Murinae</taxon>
        <taxon>Rattus</taxon>
    </lineage>
</organism>
<reference key="1">
    <citation type="journal article" date="2001" name="Brain Res.">
        <title>A novel protein interacts with a clock-related protein, rPer1.</title>
        <authorList>
            <person name="Matsuki T."/>
            <person name="Kiyama A."/>
            <person name="Kawabuchi M."/>
            <person name="Okada M."/>
            <person name="Nagai K."/>
        </authorList>
    </citation>
    <scope>NUCLEOTIDE SEQUENCE [MRNA]</scope>
    <scope>SUBCELLULAR LOCATION</scope>
    <scope>INTERACTION WITH PER1</scope>
</reference>
<reference key="2">
    <citation type="journal article" date="2005" name="Proc. Natl. Acad. Sci. U.S.A.">
        <title>Dopamine responsiveness is regulated by targeted sorting of D2 receptors.</title>
        <authorList>
            <person name="Bartlett S.E."/>
            <person name="Enquist J."/>
            <person name="Hopf F.W."/>
            <person name="Lee J.H."/>
            <person name="Gladher F."/>
            <person name="Kharazia V."/>
            <person name="Waldhoer M."/>
            <person name="Mailliard W.S."/>
            <person name="Armstrong R."/>
            <person name="Bonci A."/>
            <person name="Whistler J.L."/>
        </authorList>
    </citation>
    <scope>FUNCTION</scope>
    <scope>TISSUE SPECIFICITY</scope>
    <scope>INTERACTION WITH DRD2</scope>
</reference>
<reference key="3">
    <citation type="journal article" date="2012" name="Nat. Commun.">
        <title>Quantitative maps of protein phosphorylation sites across 14 different rat organs and tissues.</title>
        <authorList>
            <person name="Lundby A."/>
            <person name="Secher A."/>
            <person name="Lage K."/>
            <person name="Nordsborg N.B."/>
            <person name="Dmytriyev A."/>
            <person name="Lundby C."/>
            <person name="Olsen J.V."/>
        </authorList>
    </citation>
    <scope>PHOSPHORYLATION [LARGE SCALE ANALYSIS] AT THR-860 AND SER-862</scope>
    <scope>IDENTIFICATION BY MASS SPECTROMETRY [LARGE SCALE ANALYSIS]</scope>
</reference>
<keyword id="KW-0963">Cytoplasm</keyword>
<keyword id="KW-0597">Phosphoprotein</keyword>
<keyword id="KW-1185">Reference proteome</keyword>
<sequence length="1346" mass="151349">MTGAEVEPGAQAKAENKPGDENANAAEVEPEVPLVVRPKVRTQMMTGARPKVKPKGTPGARPKGETSSPGGAYAKCKPRSIPISRSKHDAQVWAPSKFRGESMSKMGKQCQISAADSPLVSNDSGAVAQAKCLSVDRELANMDTESIPKKASSPARFQPSFGPEEGTSMGSWYRPRPIPKGEAYENSDFKWADKSSGSSSFWNRDETSTRFRPRKSMKSNTRFRHMAKQEANTMSRHKNKQEFYNISSSDSEDESAKTPWFWAKDKPKVWSRPKEEPNTRSWFRSKKEVRVESTSGSECENHTKSLFWSGEEAKCRSKPRARKGVNMRARHQAKREAYSDVTSGSVDKNKKDSWFLPEEKANAFSKSKTKKEPRTRAMPREEVKTKARASTKQEARPEEEVLVGAWVLDTQDNTMGERISMKTTCVEEEPIVGDWFWSEEEASVDSETGLKSRPRAKEEQVSSFCLGSGKKTSMESGPKATSKSMPVAKDDEVIIGSWFWADDEEISLQADDESIFGSWFWGTGEKSLRSVGVSCEKMPKSGEKEVTDSWFWAGEVNTEAEMEEQASSASTKGTIFVPWFWSEKQAHMDLGTEPCSDIMAGAEEEPIIGPWFWAKVDNSVEAEVNSKSSLEDEEEPIRSPWFGAREQPNMKYAAGVGYKPMAEAEEANKKSCVWAKEPCLYPTNRESLKSTLGEKEDTVDPWLWSNNYPRTETITGSWLWAAEEGNIDDETGEEIKLPTLEDNVFNSWSWKENEETVVEAPNREESKPEAEEEDIIGSWFWAGDEDRFQPAAKIKEENKIAPEDEDTVGSWFWGKEEASVEAVKGGTFESVSGIKEEKATGSWFWTDKAKIGAGPQTVETGSETEDEAIFESLIWAAKKDSMQTGVNRVSKPKDEGEGIESWLWSGDKATTESKTVTVSESSPENGKESIVKFGSRAKDEVINKTGSGDNCKFSTEAESIVGPWFWEGDEASFESNPVPVCKAACEPESSTEHEPDPSRRPQSWDEVTVQFKPGPWGKAGFPSLNPFRFPKEAASLFAEMFGGKPKLVEVGTEREPEPQFPFQYDPSYRSVREIREHLKARESAQAENWSCNCIQCELRIGSEEFEELLLMMDRNRDPFIHEISKIAMGMRGASQFTRDFIRNSGVISLIEALMNYPSSRARTAFLENMIQMAPTYPDLNMIETYVCQVCEDTFDYDLDSSDQLSGLTMITHLTTTFDYHKVVVAYLAGFYYLLNSGNTTTRFHVLKLLLNLSESLVMTKRLLITDSVSEFMALFNREDSDENIQIILAIFENISKNIQKEALFADDEEEEEEEEAVNLEPLISAFREAEKFAKELKRKTDDQKSP</sequence>
<gene>
    <name type="primary">Gprasp1</name>
    <name type="synonym">Pips</name>
</gene>
<dbReference type="EMBL" id="AB051807">
    <property type="protein sequence ID" value="BAB64314.1"/>
    <property type="molecule type" value="mRNA"/>
</dbReference>
<dbReference type="RefSeq" id="NP_599213.1">
    <property type="nucleotide sequence ID" value="NM_134386.1"/>
</dbReference>
<dbReference type="FunCoup" id="Q920R4">
    <property type="interactions" value="304"/>
</dbReference>
<dbReference type="STRING" id="10116.ENSRNOP00000066239"/>
<dbReference type="iPTMnet" id="Q920R4"/>
<dbReference type="PhosphoSitePlus" id="Q920R4"/>
<dbReference type="jPOST" id="Q920R4"/>
<dbReference type="PaxDb" id="10116-ENSRNOP00000066239"/>
<dbReference type="GeneID" id="171407"/>
<dbReference type="KEGG" id="rno:171407"/>
<dbReference type="AGR" id="RGD:621343"/>
<dbReference type="CTD" id="9737"/>
<dbReference type="RGD" id="621343">
    <property type="gene designation" value="Gprasp1"/>
</dbReference>
<dbReference type="eggNOG" id="ENOG502S6CE">
    <property type="taxonomic scope" value="Eukaryota"/>
</dbReference>
<dbReference type="InParanoid" id="Q920R4"/>
<dbReference type="PhylomeDB" id="Q920R4"/>
<dbReference type="PRO" id="PR:Q920R4"/>
<dbReference type="Proteomes" id="UP000002494">
    <property type="component" value="Unplaced"/>
</dbReference>
<dbReference type="GO" id="GO:0005829">
    <property type="term" value="C:cytosol"/>
    <property type="evidence" value="ECO:0000318"/>
    <property type="project" value="GO_Central"/>
</dbReference>
<dbReference type="GO" id="GO:0005634">
    <property type="term" value="C:nucleus"/>
    <property type="evidence" value="ECO:0000318"/>
    <property type="project" value="GO_Central"/>
</dbReference>
<dbReference type="GO" id="GO:0008333">
    <property type="term" value="P:endosome to lysosome transport"/>
    <property type="evidence" value="ECO:0000250"/>
    <property type="project" value="UniProtKB"/>
</dbReference>
<dbReference type="GO" id="GO:1990172">
    <property type="term" value="P:G protein-coupled receptor catabolic process"/>
    <property type="evidence" value="ECO:0000250"/>
    <property type="project" value="UniProtKB"/>
</dbReference>
<dbReference type="InterPro" id="IPR006911">
    <property type="entry name" value="ARM-rpt_dom"/>
</dbReference>
<dbReference type="InterPro" id="IPR016024">
    <property type="entry name" value="ARM-type_fold"/>
</dbReference>
<dbReference type="InterPro" id="IPR043374">
    <property type="entry name" value="GASP1-3"/>
</dbReference>
<dbReference type="PANTHER" id="PTHR46414:SF3">
    <property type="entry name" value="G-PROTEIN COUPLED RECEPTOR-ASSOCIATED SORTING PROTEIN 1"/>
    <property type="match status" value="1"/>
</dbReference>
<dbReference type="PANTHER" id="PTHR46414">
    <property type="entry name" value="PROTEIN BHLHB9-RELATED"/>
    <property type="match status" value="1"/>
</dbReference>
<dbReference type="Pfam" id="PF04826">
    <property type="entry name" value="Arm_2"/>
    <property type="match status" value="1"/>
</dbReference>
<dbReference type="SUPFAM" id="SSF48371">
    <property type="entry name" value="ARM repeat"/>
    <property type="match status" value="1"/>
</dbReference>
<evidence type="ECO:0000250" key="1"/>
<evidence type="ECO:0000250" key="2">
    <source>
        <dbReference type="UniProtKB" id="Q5U4C1"/>
    </source>
</evidence>
<evidence type="ECO:0000256" key="3">
    <source>
        <dbReference type="SAM" id="MobiDB-lite"/>
    </source>
</evidence>
<evidence type="ECO:0000269" key="4">
    <source>
    </source>
</evidence>
<evidence type="ECO:0000269" key="5">
    <source>
    </source>
</evidence>
<evidence type="ECO:0000305" key="6"/>
<evidence type="ECO:0007744" key="7">
    <source>
    </source>
</evidence>
<proteinExistence type="evidence at protein level"/>
<comment type="function">
    <text evidence="1 5">Modulates lysosomal sorting and functional down-regulation of a variety of G-protein coupled receptors. Targets receptors for degradation in lysosomes via its interaction with BECN2 (By similarity).</text>
</comment>
<comment type="subunit">
    <text evidence="1 4 5">Interacts with cytoplasmic tails of a variety of G-protein coupled receptors such as delta opioid receptor/OPRD1, beta-2 adrenergic receptor/ADRB2 and D4 dopamine receptor/DRD4. Interacts with BECN2; the interaction is direct (By similarity) and with D2 dopamine receptor/DRD2. Interacts with PER1.</text>
</comment>
<comment type="subcellular location">
    <subcellularLocation>
        <location evidence="4">Cytoplasm</location>
    </subcellularLocation>
</comment>
<comment type="tissue specificity">
    <text evidence="5">Expressed in the brain.</text>
</comment>
<comment type="similarity">
    <text evidence="6">Belongs to the GPRASP family.</text>
</comment>